<organism>
    <name type="scientific">Opitutus terrae (strain DSM 11246 / JCM 15787 / PB90-1)</name>
    <dbReference type="NCBI Taxonomy" id="452637"/>
    <lineage>
        <taxon>Bacteria</taxon>
        <taxon>Pseudomonadati</taxon>
        <taxon>Verrucomicrobiota</taxon>
        <taxon>Opitutia</taxon>
        <taxon>Opitutales</taxon>
        <taxon>Opitutaceae</taxon>
        <taxon>Opitutus</taxon>
    </lineage>
</organism>
<gene>
    <name evidence="1" type="primary">rpsB</name>
    <name type="ordered locus">Oter_4501</name>
</gene>
<keyword id="KW-1185">Reference proteome</keyword>
<keyword id="KW-0687">Ribonucleoprotein</keyword>
<keyword id="KW-0689">Ribosomal protein</keyword>
<proteinExistence type="inferred from homology"/>
<comment type="similarity">
    <text evidence="1">Belongs to the universal ribosomal protein uS2 family.</text>
</comment>
<evidence type="ECO:0000255" key="1">
    <source>
        <dbReference type="HAMAP-Rule" id="MF_00291"/>
    </source>
</evidence>
<evidence type="ECO:0000256" key="2">
    <source>
        <dbReference type="SAM" id="MobiDB-lite"/>
    </source>
</evidence>
<evidence type="ECO:0000305" key="3"/>
<accession>B1ZQ51</accession>
<feature type="chain" id="PRO_0000352020" description="Small ribosomal subunit protein uS2">
    <location>
        <begin position="1"/>
        <end position="302"/>
    </location>
</feature>
<feature type="region of interest" description="Disordered" evidence="2">
    <location>
        <begin position="275"/>
        <end position="302"/>
    </location>
</feature>
<feature type="compositionally biased region" description="Basic residues" evidence="2">
    <location>
        <begin position="287"/>
        <end position="302"/>
    </location>
</feature>
<dbReference type="EMBL" id="CP001032">
    <property type="protein sequence ID" value="ACB77772.1"/>
    <property type="molecule type" value="Genomic_DNA"/>
</dbReference>
<dbReference type="RefSeq" id="WP_012377286.1">
    <property type="nucleotide sequence ID" value="NC_010571.1"/>
</dbReference>
<dbReference type="SMR" id="B1ZQ51"/>
<dbReference type="STRING" id="452637.Oter_4501"/>
<dbReference type="KEGG" id="ote:Oter_4501"/>
<dbReference type="eggNOG" id="COG0052">
    <property type="taxonomic scope" value="Bacteria"/>
</dbReference>
<dbReference type="HOGENOM" id="CLU_040318_2_2_0"/>
<dbReference type="OrthoDB" id="9808036at2"/>
<dbReference type="Proteomes" id="UP000007013">
    <property type="component" value="Chromosome"/>
</dbReference>
<dbReference type="GO" id="GO:0022627">
    <property type="term" value="C:cytosolic small ribosomal subunit"/>
    <property type="evidence" value="ECO:0007669"/>
    <property type="project" value="TreeGrafter"/>
</dbReference>
<dbReference type="GO" id="GO:0003735">
    <property type="term" value="F:structural constituent of ribosome"/>
    <property type="evidence" value="ECO:0007669"/>
    <property type="project" value="InterPro"/>
</dbReference>
<dbReference type="GO" id="GO:0006412">
    <property type="term" value="P:translation"/>
    <property type="evidence" value="ECO:0007669"/>
    <property type="project" value="UniProtKB-UniRule"/>
</dbReference>
<dbReference type="CDD" id="cd01425">
    <property type="entry name" value="RPS2"/>
    <property type="match status" value="1"/>
</dbReference>
<dbReference type="Gene3D" id="3.40.50.10490">
    <property type="entry name" value="Glucose-6-phosphate isomerase like protein, domain 1"/>
    <property type="match status" value="1"/>
</dbReference>
<dbReference type="Gene3D" id="1.10.287.610">
    <property type="entry name" value="Helix hairpin bin"/>
    <property type="match status" value="1"/>
</dbReference>
<dbReference type="HAMAP" id="MF_00291_B">
    <property type="entry name" value="Ribosomal_uS2_B"/>
    <property type="match status" value="1"/>
</dbReference>
<dbReference type="InterPro" id="IPR001865">
    <property type="entry name" value="Ribosomal_uS2"/>
</dbReference>
<dbReference type="InterPro" id="IPR005706">
    <property type="entry name" value="Ribosomal_uS2_bac/mit/plastid"/>
</dbReference>
<dbReference type="InterPro" id="IPR018130">
    <property type="entry name" value="Ribosomal_uS2_CS"/>
</dbReference>
<dbReference type="InterPro" id="IPR023591">
    <property type="entry name" value="Ribosomal_uS2_flav_dom_sf"/>
</dbReference>
<dbReference type="NCBIfam" id="TIGR01011">
    <property type="entry name" value="rpsB_bact"/>
    <property type="match status" value="1"/>
</dbReference>
<dbReference type="PANTHER" id="PTHR12534">
    <property type="entry name" value="30S RIBOSOMAL PROTEIN S2 PROKARYOTIC AND ORGANELLAR"/>
    <property type="match status" value="1"/>
</dbReference>
<dbReference type="PANTHER" id="PTHR12534:SF0">
    <property type="entry name" value="SMALL RIBOSOMAL SUBUNIT PROTEIN US2M"/>
    <property type="match status" value="1"/>
</dbReference>
<dbReference type="Pfam" id="PF00318">
    <property type="entry name" value="Ribosomal_S2"/>
    <property type="match status" value="1"/>
</dbReference>
<dbReference type="PRINTS" id="PR00395">
    <property type="entry name" value="RIBOSOMALS2"/>
</dbReference>
<dbReference type="SUPFAM" id="SSF52313">
    <property type="entry name" value="Ribosomal protein S2"/>
    <property type="match status" value="1"/>
</dbReference>
<dbReference type="PROSITE" id="PS00963">
    <property type="entry name" value="RIBOSOMAL_S2_2"/>
    <property type="match status" value="1"/>
</dbReference>
<protein>
    <recommendedName>
        <fullName evidence="1">Small ribosomal subunit protein uS2</fullName>
    </recommendedName>
    <alternativeName>
        <fullName evidence="3">30S ribosomal protein S2</fullName>
    </alternativeName>
</protein>
<sequence>MNVTPKDLLDAGVHFGHQTKRWNPRSKPFVFDHRQGISIIDLGKTHAALEKACTFLEDTVGNGGNVLFVGTKRQAKDIIREAATSTNMPFCVDRWLGGTLTNYETVKRSIAKYKKYQQMETSGDMNKLASKEVAAIKREMVRMQKNFSGIVDMPGLPTAMFVVDVNHEKIAVAEAARSGIPCVGICDTNSDPSTLSHPIPGNDDAVKSIRIIVEAIVAAVQNGLSQRDARRAARGAADLKAAAAAAAGITGETAATPEVDLSKVELPADVAAVVEGEGESEAEPVVAKKKPVRAKRPAVKAE</sequence>
<reference key="1">
    <citation type="journal article" date="2011" name="J. Bacteriol.">
        <title>Genome sequence of the verrucomicrobium Opitutus terrae PB90-1, an abundant inhabitant of rice paddy soil ecosystems.</title>
        <authorList>
            <person name="van Passel M.W."/>
            <person name="Kant R."/>
            <person name="Palva A."/>
            <person name="Copeland A."/>
            <person name="Lucas S."/>
            <person name="Lapidus A."/>
            <person name="Glavina del Rio T."/>
            <person name="Pitluck S."/>
            <person name="Goltsman E."/>
            <person name="Clum A."/>
            <person name="Sun H."/>
            <person name="Schmutz J."/>
            <person name="Larimer F.W."/>
            <person name="Land M.L."/>
            <person name="Hauser L."/>
            <person name="Kyrpides N."/>
            <person name="Mikhailova N."/>
            <person name="Richardson P.P."/>
            <person name="Janssen P.H."/>
            <person name="de Vos W.M."/>
            <person name="Smidt H."/>
        </authorList>
    </citation>
    <scope>NUCLEOTIDE SEQUENCE [LARGE SCALE GENOMIC DNA]</scope>
    <source>
        <strain>DSM 11246 / JCM 15787 / PB90-1</strain>
    </source>
</reference>
<name>RS2_OPITP</name>